<reference evidence="10" key="1">
    <citation type="journal article" date="1998" name="Science">
        <title>Genome sequence of the nematode C. elegans: a platform for investigating biology.</title>
        <authorList>
            <consortium name="The C. elegans sequencing consortium"/>
        </authorList>
    </citation>
    <scope>NUCLEOTIDE SEQUENCE [LARGE SCALE GENOMIC DNA]</scope>
    <source>
        <strain evidence="10">Bristol N2</strain>
    </source>
</reference>
<reference evidence="9" key="2">
    <citation type="journal article" date="2008" name="Dev. Cell">
        <title>A casein kinase 1 and PAR proteins regulate asymmetry of a PIP(2) synthesis enzyme for asymmetric spindle positioning.</title>
        <authorList>
            <person name="Panbianco C."/>
            <person name="Weinkove D."/>
            <person name="Zanin E."/>
            <person name="Jones D."/>
            <person name="Divecha N."/>
            <person name="Gotta M."/>
            <person name="Ahringer J."/>
        </authorList>
    </citation>
    <scope>FUNCTION</scope>
    <scope>SUBCELLULAR LOCATION</scope>
    <scope>DISRUPTION PHENOTYPE</scope>
</reference>
<reference key="3">
    <citation type="journal article" date="2017" name="Mol. Biol. Cell">
        <title>A casein kinase 1 prevents expulsion of the oocyte meiotic spindle into a polar body by regulating cortical contractility.</title>
        <authorList>
            <person name="Flynn J.R."/>
            <person name="McNally F.J."/>
        </authorList>
    </citation>
    <scope>FUNCTION</scope>
    <scope>DISRUPTION PHENOTYPE</scope>
</reference>
<reference key="4">
    <citation type="journal article" date="2023" name="PLoS Genet.">
        <title>Casein kinase 1 gamma regulates oxidative stress response via interacting with the NADPH dual oxidase complex.</title>
        <authorList>
            <person name="Hu Y."/>
            <person name="Xu Z."/>
            <person name="Pan Q."/>
            <person name="Ma L."/>
        </authorList>
    </citation>
    <scope>FUNCTION</scope>
    <scope>INTERACTION WITH DOXA-1</scope>
    <scope>TISSUE SPECIFICITY</scope>
    <scope>DISRUPTION PHENOTYPE</scope>
    <scope>MUTAGENESIS OF ARG-161; 388-CYS--CYS-390 AND 388-CYS--LYS-407</scope>
</reference>
<keyword id="KW-0067">ATP-binding</keyword>
<keyword id="KW-0131">Cell cycle</keyword>
<keyword id="KW-0132">Cell division</keyword>
<keyword id="KW-0963">Cytoplasm</keyword>
<keyword id="KW-0418">Kinase</keyword>
<keyword id="KW-0469">Meiosis</keyword>
<keyword id="KW-0547">Nucleotide-binding</keyword>
<keyword id="KW-1185">Reference proteome</keyword>
<keyword id="KW-0723">Serine/threonine-protein kinase</keyword>
<keyword id="KW-0808">Transferase</keyword>
<dbReference type="EC" id="2.7.11.1" evidence="1"/>
<dbReference type="EMBL" id="AL032656">
    <property type="protein sequence ID" value="CAB60309.2"/>
    <property type="molecule type" value="Genomic_DNA"/>
</dbReference>
<dbReference type="RefSeq" id="NP_492694.1">
    <property type="nucleotide sequence ID" value="NM_060293.7"/>
</dbReference>
<dbReference type="SMR" id="Q8WQ99"/>
<dbReference type="FunCoup" id="Q8WQ99">
    <property type="interactions" value="2714"/>
</dbReference>
<dbReference type="STRING" id="6239.Y106G6E.6.1"/>
<dbReference type="PaxDb" id="6239-Y106G6E.6"/>
<dbReference type="PeptideAtlas" id="Q8WQ99"/>
<dbReference type="EnsemblMetazoa" id="Y106G6E.6.1">
    <property type="protein sequence ID" value="Y106G6E.6.1"/>
    <property type="gene ID" value="WBGene00013709"/>
</dbReference>
<dbReference type="EnsemblMetazoa" id="Y106G6E.6.2">
    <property type="protein sequence ID" value="Y106G6E.6.2"/>
    <property type="gene ID" value="WBGene00013709"/>
</dbReference>
<dbReference type="GeneID" id="172891"/>
<dbReference type="KEGG" id="cel:CELE_Y106G6E.6"/>
<dbReference type="UCSC" id="Y106G6E.6.1">
    <property type="organism name" value="c. elegans"/>
</dbReference>
<dbReference type="AGR" id="WB:WBGene00013709"/>
<dbReference type="CTD" id="172891"/>
<dbReference type="WormBase" id="Y106G6E.6">
    <property type="protein sequence ID" value="CE29604"/>
    <property type="gene ID" value="WBGene00013709"/>
    <property type="gene designation" value="csnk-1"/>
</dbReference>
<dbReference type="eggNOG" id="KOG1165">
    <property type="taxonomic scope" value="Eukaryota"/>
</dbReference>
<dbReference type="GeneTree" id="ENSGT00940000160646"/>
<dbReference type="HOGENOM" id="CLU_019279_2_0_1"/>
<dbReference type="InParanoid" id="Q8WQ99"/>
<dbReference type="OMA" id="HERHFIY"/>
<dbReference type="OrthoDB" id="5800476at2759"/>
<dbReference type="PhylomeDB" id="Q8WQ99"/>
<dbReference type="Reactome" id="R-CEL-1660661">
    <property type="pathway name" value="Sphingolipid de novo biosynthesis"/>
</dbReference>
<dbReference type="PRO" id="PR:Q8WQ99"/>
<dbReference type="Proteomes" id="UP000001940">
    <property type="component" value="Chromosome I"/>
</dbReference>
<dbReference type="Bgee" id="WBGene00013709">
    <property type="expression patterns" value="Expressed in pharyngeal muscle cell (C elegans) and 4 other cell types or tissues"/>
</dbReference>
<dbReference type="GO" id="GO:0005818">
    <property type="term" value="C:aster"/>
    <property type="evidence" value="ECO:0000314"/>
    <property type="project" value="WormBase"/>
</dbReference>
<dbReference type="GO" id="GO:0005938">
    <property type="term" value="C:cell cortex"/>
    <property type="evidence" value="ECO:0000314"/>
    <property type="project" value="WormBase"/>
</dbReference>
<dbReference type="GO" id="GO:0005737">
    <property type="term" value="C:cytoplasm"/>
    <property type="evidence" value="ECO:0000314"/>
    <property type="project" value="WormBase"/>
</dbReference>
<dbReference type="GO" id="GO:0005634">
    <property type="term" value="C:nucleus"/>
    <property type="evidence" value="ECO:0000318"/>
    <property type="project" value="GO_Central"/>
</dbReference>
<dbReference type="GO" id="GO:0005886">
    <property type="term" value="C:plasma membrane"/>
    <property type="evidence" value="ECO:0000314"/>
    <property type="project" value="UniProtKB"/>
</dbReference>
<dbReference type="GO" id="GO:0005524">
    <property type="term" value="F:ATP binding"/>
    <property type="evidence" value="ECO:0007669"/>
    <property type="project" value="UniProtKB-KW"/>
</dbReference>
<dbReference type="GO" id="GO:0106310">
    <property type="term" value="F:protein serine kinase activity"/>
    <property type="evidence" value="ECO:0007669"/>
    <property type="project" value="RHEA"/>
</dbReference>
<dbReference type="GO" id="GO:0004674">
    <property type="term" value="F:protein serine/threonine kinase activity"/>
    <property type="evidence" value="ECO:0000318"/>
    <property type="project" value="GO_Central"/>
</dbReference>
<dbReference type="GO" id="GO:0008356">
    <property type="term" value="P:asymmetric cell division"/>
    <property type="evidence" value="ECO:0000315"/>
    <property type="project" value="UniProtKB"/>
</dbReference>
<dbReference type="GO" id="GO:0006897">
    <property type="term" value="P:endocytosis"/>
    <property type="evidence" value="ECO:0000318"/>
    <property type="project" value="GO_Central"/>
</dbReference>
<dbReference type="GO" id="GO:0030590">
    <property type="term" value="P:first cell cycle pseudocleavage"/>
    <property type="evidence" value="ECO:0000315"/>
    <property type="project" value="UniProtKB"/>
</dbReference>
<dbReference type="GO" id="GO:0051321">
    <property type="term" value="P:meiotic cell cycle"/>
    <property type="evidence" value="ECO:0007669"/>
    <property type="project" value="UniProtKB-KW"/>
</dbReference>
<dbReference type="GO" id="GO:0090263">
    <property type="term" value="P:positive regulation of canonical Wnt signaling pathway"/>
    <property type="evidence" value="ECO:0000318"/>
    <property type="project" value="GO_Central"/>
</dbReference>
<dbReference type="GO" id="GO:0008104">
    <property type="term" value="P:protein localization"/>
    <property type="evidence" value="ECO:0000315"/>
    <property type="project" value="UniProtKB"/>
</dbReference>
<dbReference type="GO" id="GO:0032888">
    <property type="term" value="P:regulation of mitotic spindle elongation"/>
    <property type="evidence" value="ECO:0000315"/>
    <property type="project" value="UniProtKB"/>
</dbReference>
<dbReference type="GO" id="GO:0032880">
    <property type="term" value="P:regulation of protein localization"/>
    <property type="evidence" value="ECO:0000315"/>
    <property type="project" value="GO_Central"/>
</dbReference>
<dbReference type="GO" id="GO:0007165">
    <property type="term" value="P:signal transduction"/>
    <property type="evidence" value="ECO:0000318"/>
    <property type="project" value="GO_Central"/>
</dbReference>
<dbReference type="GO" id="GO:0051653">
    <property type="term" value="P:spindle localization"/>
    <property type="evidence" value="ECO:0000315"/>
    <property type="project" value="UniProtKB"/>
</dbReference>
<dbReference type="CDD" id="cd14126">
    <property type="entry name" value="STKc_CK1_gamma"/>
    <property type="match status" value="1"/>
</dbReference>
<dbReference type="FunFam" id="1.10.510.10:FF:000703">
    <property type="entry name" value="Casein kinase I gamma"/>
    <property type="match status" value="1"/>
</dbReference>
<dbReference type="Gene3D" id="1.10.510.10">
    <property type="entry name" value="Transferase(Phosphotransferase) domain 1"/>
    <property type="match status" value="1"/>
</dbReference>
<dbReference type="InterPro" id="IPR050235">
    <property type="entry name" value="CK1_Ser-Thr_kinase"/>
</dbReference>
<dbReference type="InterPro" id="IPR011009">
    <property type="entry name" value="Kinase-like_dom_sf"/>
</dbReference>
<dbReference type="InterPro" id="IPR000719">
    <property type="entry name" value="Prot_kinase_dom"/>
</dbReference>
<dbReference type="InterPro" id="IPR017441">
    <property type="entry name" value="Protein_kinase_ATP_BS"/>
</dbReference>
<dbReference type="InterPro" id="IPR008271">
    <property type="entry name" value="Ser/Thr_kinase_AS"/>
</dbReference>
<dbReference type="PANTHER" id="PTHR11909">
    <property type="entry name" value="CASEIN KINASE-RELATED"/>
    <property type="match status" value="1"/>
</dbReference>
<dbReference type="Pfam" id="PF00069">
    <property type="entry name" value="Pkinase"/>
    <property type="match status" value="1"/>
</dbReference>
<dbReference type="SMART" id="SM00220">
    <property type="entry name" value="S_TKc"/>
    <property type="match status" value="1"/>
</dbReference>
<dbReference type="SUPFAM" id="SSF56112">
    <property type="entry name" value="Protein kinase-like (PK-like)"/>
    <property type="match status" value="1"/>
</dbReference>
<dbReference type="PROSITE" id="PS00107">
    <property type="entry name" value="PROTEIN_KINASE_ATP"/>
    <property type="match status" value="1"/>
</dbReference>
<dbReference type="PROSITE" id="PS50011">
    <property type="entry name" value="PROTEIN_KINASE_DOM"/>
    <property type="match status" value="1"/>
</dbReference>
<dbReference type="PROSITE" id="PS00108">
    <property type="entry name" value="PROTEIN_KINASE_ST"/>
    <property type="match status" value="1"/>
</dbReference>
<proteinExistence type="evidence at protein level"/>
<protein>
    <recommendedName>
        <fullName evidence="7">Casein kinase I gamma</fullName>
        <shortName evidence="1">CKI-gamma</shortName>
        <ecNumber evidence="1">2.7.11.1</ecNumber>
    </recommendedName>
</protein>
<sequence length="407" mass="46369">MTNTRGSNSATSASTTNSQGVLMVGPNFKVGKKIGCGNFGELRLGKNLYNNEHVAIKLEPMKSKAPQLHLEYRFYKLLGQAEGLPQVHYFGPCGKYNALVMELLGHSLEDLFDLCDRHFSLKTVAMVAMQLIRRIEYVHTKHLIYRDVKPENFLIGRYSTRKQHVLHIIDFGLAKEYIDCDTGKHIAYREHKSLTGTARYMSINTHLGKEQSRRDDLEALGHMFMYFLRGSLPWQGLKADTLKERYQKIGDTKRQTAVEVLCEGFPDEFAQYLRYARRLDFFETPDYDFCYNLFKSVLDRLGATYDYEFDWTPKLNNVSTPSGSLHTSESKDVKRTDRGELKVSQAAAHAQFGSTQVINSNAGEVVEESRNTEGRTAAGDNSSGEVKCCCFRRRRRKHNNATPATQK</sequence>
<feature type="chain" id="PRO_0000432624" description="Casein kinase I gamma">
    <location>
        <begin position="1"/>
        <end position="407"/>
    </location>
</feature>
<feature type="domain" description="Protein kinase" evidence="2">
    <location>
        <begin position="28"/>
        <end position="298"/>
    </location>
</feature>
<feature type="region of interest" description="Disordered" evidence="3">
    <location>
        <begin position="319"/>
        <end position="339"/>
    </location>
</feature>
<feature type="region of interest" description="Disordered" evidence="3">
    <location>
        <begin position="359"/>
        <end position="384"/>
    </location>
</feature>
<feature type="region of interest" description="Putative palmitoylation signal" evidence="8">
    <location>
        <begin position="386"/>
        <end position="394"/>
    </location>
</feature>
<feature type="compositionally biased region" description="Basic and acidic residues" evidence="3">
    <location>
        <begin position="328"/>
        <end position="339"/>
    </location>
</feature>
<feature type="active site" description="Proton acceptor" evidence="2">
    <location>
        <position position="147"/>
    </location>
</feature>
<feature type="binding site" evidence="2">
    <location>
        <begin position="34"/>
        <end position="42"/>
    </location>
    <ligand>
        <name>ATP</name>
        <dbReference type="ChEBI" id="CHEBI:30616"/>
    </ligand>
</feature>
<feature type="binding site" evidence="2">
    <location>
        <position position="57"/>
    </location>
    <ligand>
        <name>ATP</name>
        <dbReference type="ChEBI" id="CHEBI:30616"/>
    </ligand>
</feature>
<feature type="mutagenesis site" description="In mac397; increases survival in excess iodide." evidence="6">
    <original>R</original>
    <variation>H</variation>
    <location>
        <position position="161"/>
    </location>
</feature>
<feature type="mutagenesis site" description="In transgene rescue experiments with csnk-1 loss-of-function mutant, results in reduced capacity of the transgene to revert increased survival in excess iodide, an oxidative stressor." evidence="6">
    <location>
        <begin position="388"/>
        <end position="407"/>
    </location>
</feature>
<feature type="mutagenesis site" description="In transgene rescue experiments with csnk-1 loss-of-function mutant, results in reduced capacity of the transgene to revert increased survival in excess iodide, an oxidative stressor." evidence="6">
    <original>CCC</original>
    <variation>S</variation>
    <location>
        <begin position="388"/>
        <end position="390"/>
    </location>
</feature>
<organism evidence="10">
    <name type="scientific">Caenorhabditis elegans</name>
    <dbReference type="NCBI Taxonomy" id="6239"/>
    <lineage>
        <taxon>Eukaryota</taxon>
        <taxon>Metazoa</taxon>
        <taxon>Ecdysozoa</taxon>
        <taxon>Nematoda</taxon>
        <taxon>Chromadorea</taxon>
        <taxon>Rhabditida</taxon>
        <taxon>Rhabditina</taxon>
        <taxon>Rhabditomorpha</taxon>
        <taxon>Rhabditoidea</taxon>
        <taxon>Rhabditidae</taxon>
        <taxon>Peloderinae</taxon>
        <taxon>Caenorhabditis</taxon>
    </lineage>
</organism>
<name>KC1G_CAEEL</name>
<gene>
    <name evidence="11" type="primary">csnk-1</name>
    <name evidence="11" type="ORF">Y106G6E.6</name>
</gene>
<accession>Q8WQ99</accession>
<comment type="function">
    <text evidence="4 5 6">Involved in the asymmetric cell division of the embryo downstream of par-2 and par-3 by regulating the asymmetric cortical distribution of pkk-1, a phosphatidylinositol 4,5-bisphosphate-producing enzyme, which in turn regulates the asymmetrical distribution of grp-1, grp-2 and lin-5 (PubMed:18694560). Prevents expulsion of the entire meiotic spindle into a polar body by negatively regulating the Rho GTPase signaling pathway (PubMed:28701347). Involved in regulation of reactive oxygen species (ROS) levels (PubMed:37099597).</text>
</comment>
<comment type="catalytic activity">
    <reaction evidence="1">
        <text>L-seryl-[protein] + ATP = O-phospho-L-seryl-[protein] + ADP + H(+)</text>
        <dbReference type="Rhea" id="RHEA:17989"/>
        <dbReference type="Rhea" id="RHEA-COMP:9863"/>
        <dbReference type="Rhea" id="RHEA-COMP:11604"/>
        <dbReference type="ChEBI" id="CHEBI:15378"/>
        <dbReference type="ChEBI" id="CHEBI:29999"/>
        <dbReference type="ChEBI" id="CHEBI:30616"/>
        <dbReference type="ChEBI" id="CHEBI:83421"/>
        <dbReference type="ChEBI" id="CHEBI:456216"/>
        <dbReference type="EC" id="2.7.11.1"/>
    </reaction>
</comment>
<comment type="catalytic activity">
    <reaction evidence="1">
        <text>L-threonyl-[protein] + ATP = O-phospho-L-threonyl-[protein] + ADP + H(+)</text>
        <dbReference type="Rhea" id="RHEA:46608"/>
        <dbReference type="Rhea" id="RHEA-COMP:11060"/>
        <dbReference type="Rhea" id="RHEA-COMP:11605"/>
        <dbReference type="ChEBI" id="CHEBI:15378"/>
        <dbReference type="ChEBI" id="CHEBI:30013"/>
        <dbReference type="ChEBI" id="CHEBI:30616"/>
        <dbReference type="ChEBI" id="CHEBI:61977"/>
        <dbReference type="ChEBI" id="CHEBI:456216"/>
        <dbReference type="EC" id="2.7.11.1"/>
    </reaction>
</comment>
<comment type="subunit">
    <text evidence="6">Interacts with doxa-1.</text>
</comment>
<comment type="subcellular location">
    <subcellularLocation>
        <location evidence="4">Cytoplasm</location>
        <location evidence="4">Cell cortex</location>
    </subcellularLocation>
    <subcellularLocation>
        <location evidence="4">Cytoplasm</location>
    </subcellularLocation>
    <text evidence="4">Cortical localization during all cell cycle stages. In the cytoplasm, forms punctate structures around the asters during mitosis. Enriched in the anterior region of the 1 cell-stage embryo.</text>
</comment>
<comment type="tissue specificity">
    <text evidence="6">Broadly expressed; expression observed in pharynx, head neurons, hypodermis, intestine, ventral cord, dorsal cord, vulval muscles and body-wall muscles.</text>
</comment>
<comment type="disruption phenotype">
    <text evidence="4 5 6">RNAi-mediated knockdown in 1-cell embryos results in mislocalization of the pronuclei and the spindle towards the anterior part of the embryo, spindle instability, and failure of asymmetric cell division in 50 percent of embryos. In addition, spindle pulling forces are increased. par-2 and par-3 mediated embryo polarity is normal. Oocytes have increased cortical grp-1 and grp-2 localization (PubMed:18694560). Large polar bodies formation during female meiosis (PubMed:28701347). Occasional presence of embryos with a single pronucleus after the completion of female meiosis as a result of extrusion of all maternal DNA into a polar body due to the contractile ring ingressing past 50% spindle length (PubMed:28701347). Formation of deep and stable membrane invaginations far from the meiotic spindle (PubMed:28701347). Increased duration of cortical myosin and anillin patches during meiosis (PubMed:28701347). Resistance to iodide toxicity (PubMed:37099597).</text>
</comment>
<comment type="miscellaneous">
    <text evidence="6">Shares partial functional conservation with human CSNK1G1, CSNK1G2 and CSNK1G3 in reverting increased survival in excess iodide.</text>
</comment>
<comment type="similarity">
    <text evidence="9">Belongs to the protein kinase superfamily. CK1 Ser/Thr protein kinase family. Casein kinase I subfamily.</text>
</comment>
<evidence type="ECO:0000250" key="1">
    <source>
        <dbReference type="UniProtKB" id="P78368"/>
    </source>
</evidence>
<evidence type="ECO:0000255" key="2">
    <source>
        <dbReference type="PROSITE-ProRule" id="PRU00159"/>
    </source>
</evidence>
<evidence type="ECO:0000256" key="3">
    <source>
        <dbReference type="SAM" id="MobiDB-lite"/>
    </source>
</evidence>
<evidence type="ECO:0000269" key="4">
    <source>
    </source>
</evidence>
<evidence type="ECO:0000269" key="5">
    <source>
    </source>
</evidence>
<evidence type="ECO:0000269" key="6">
    <source>
    </source>
</evidence>
<evidence type="ECO:0000303" key="7">
    <source>
    </source>
</evidence>
<evidence type="ECO:0000303" key="8">
    <source>
    </source>
</evidence>
<evidence type="ECO:0000305" key="9"/>
<evidence type="ECO:0000312" key="10">
    <source>
        <dbReference type="Proteomes" id="UP000001940"/>
    </source>
</evidence>
<evidence type="ECO:0000312" key="11">
    <source>
        <dbReference type="WormBase" id="Y106G6E.6"/>
    </source>
</evidence>